<feature type="chain" id="PRO_1000121571" description="Large ribosomal subunit protein bL28">
    <location>
        <begin position="1"/>
        <end position="78"/>
    </location>
</feature>
<gene>
    <name evidence="1" type="primary">rpmB</name>
    <name type="ordered locus">AFE_2670</name>
</gene>
<keyword id="KW-1185">Reference proteome</keyword>
<keyword id="KW-0687">Ribonucleoprotein</keyword>
<keyword id="KW-0689">Ribosomal protein</keyword>
<comment type="similarity">
    <text evidence="1">Belongs to the bacterial ribosomal protein bL28 family.</text>
</comment>
<name>RL28_ACIF2</name>
<dbReference type="EMBL" id="CP001219">
    <property type="protein sequence ID" value="ACK80255.1"/>
    <property type="molecule type" value="Genomic_DNA"/>
</dbReference>
<dbReference type="RefSeq" id="WP_009567983.1">
    <property type="nucleotide sequence ID" value="NC_011761.1"/>
</dbReference>
<dbReference type="SMR" id="B7J7Y4"/>
<dbReference type="STRING" id="243159.AFE_2670"/>
<dbReference type="PaxDb" id="243159-AFE_2670"/>
<dbReference type="GeneID" id="65281714"/>
<dbReference type="KEGG" id="afr:AFE_2670"/>
<dbReference type="eggNOG" id="COG0227">
    <property type="taxonomic scope" value="Bacteria"/>
</dbReference>
<dbReference type="HOGENOM" id="CLU_064548_3_1_6"/>
<dbReference type="Proteomes" id="UP000001362">
    <property type="component" value="Chromosome"/>
</dbReference>
<dbReference type="GO" id="GO:0022625">
    <property type="term" value="C:cytosolic large ribosomal subunit"/>
    <property type="evidence" value="ECO:0007669"/>
    <property type="project" value="TreeGrafter"/>
</dbReference>
<dbReference type="GO" id="GO:0003735">
    <property type="term" value="F:structural constituent of ribosome"/>
    <property type="evidence" value="ECO:0007669"/>
    <property type="project" value="InterPro"/>
</dbReference>
<dbReference type="GO" id="GO:0006412">
    <property type="term" value="P:translation"/>
    <property type="evidence" value="ECO:0007669"/>
    <property type="project" value="UniProtKB-UniRule"/>
</dbReference>
<dbReference type="FunFam" id="2.30.170.40:FF:000001">
    <property type="entry name" value="50S ribosomal protein L28"/>
    <property type="match status" value="1"/>
</dbReference>
<dbReference type="Gene3D" id="2.30.170.40">
    <property type="entry name" value="Ribosomal protein L28/L24"/>
    <property type="match status" value="1"/>
</dbReference>
<dbReference type="HAMAP" id="MF_00373">
    <property type="entry name" value="Ribosomal_bL28"/>
    <property type="match status" value="1"/>
</dbReference>
<dbReference type="InterPro" id="IPR026569">
    <property type="entry name" value="Ribosomal_bL28"/>
</dbReference>
<dbReference type="InterPro" id="IPR034704">
    <property type="entry name" value="Ribosomal_bL28/bL31-like_sf"/>
</dbReference>
<dbReference type="InterPro" id="IPR001383">
    <property type="entry name" value="Ribosomal_bL28_bact-type"/>
</dbReference>
<dbReference type="InterPro" id="IPR037147">
    <property type="entry name" value="Ribosomal_bL28_sf"/>
</dbReference>
<dbReference type="NCBIfam" id="TIGR00009">
    <property type="entry name" value="L28"/>
    <property type="match status" value="1"/>
</dbReference>
<dbReference type="PANTHER" id="PTHR13528">
    <property type="entry name" value="39S RIBOSOMAL PROTEIN L28, MITOCHONDRIAL"/>
    <property type="match status" value="1"/>
</dbReference>
<dbReference type="PANTHER" id="PTHR13528:SF2">
    <property type="entry name" value="LARGE RIBOSOMAL SUBUNIT PROTEIN BL28M"/>
    <property type="match status" value="1"/>
</dbReference>
<dbReference type="Pfam" id="PF00830">
    <property type="entry name" value="Ribosomal_L28"/>
    <property type="match status" value="1"/>
</dbReference>
<dbReference type="SUPFAM" id="SSF143800">
    <property type="entry name" value="L28p-like"/>
    <property type="match status" value="1"/>
</dbReference>
<evidence type="ECO:0000255" key="1">
    <source>
        <dbReference type="HAMAP-Rule" id="MF_00373"/>
    </source>
</evidence>
<evidence type="ECO:0000305" key="2"/>
<reference key="1">
    <citation type="journal article" date="2008" name="BMC Genomics">
        <title>Acidithiobacillus ferrooxidans metabolism: from genome sequence to industrial applications.</title>
        <authorList>
            <person name="Valdes J."/>
            <person name="Pedroso I."/>
            <person name="Quatrini R."/>
            <person name="Dodson R.J."/>
            <person name="Tettelin H."/>
            <person name="Blake R. II"/>
            <person name="Eisen J.A."/>
            <person name="Holmes D.S."/>
        </authorList>
    </citation>
    <scope>NUCLEOTIDE SEQUENCE [LARGE SCALE GENOMIC DNA]</scope>
    <source>
        <strain>ATCC 23270 / DSM 14882 / CIP 104768 / NCIMB 8455</strain>
    </source>
</reference>
<proteinExistence type="inferred from homology"/>
<organism>
    <name type="scientific">Acidithiobacillus ferrooxidans (strain ATCC 23270 / DSM 14882 / CIP 104768 / NCIMB 8455)</name>
    <name type="common">Ferrobacillus ferrooxidans (strain ATCC 23270)</name>
    <dbReference type="NCBI Taxonomy" id="243159"/>
    <lineage>
        <taxon>Bacteria</taxon>
        <taxon>Pseudomonadati</taxon>
        <taxon>Pseudomonadota</taxon>
        <taxon>Acidithiobacillia</taxon>
        <taxon>Acidithiobacillales</taxon>
        <taxon>Acidithiobacillaceae</taxon>
        <taxon>Acidithiobacillus</taxon>
    </lineage>
</organism>
<protein>
    <recommendedName>
        <fullName evidence="1">Large ribosomal subunit protein bL28</fullName>
    </recommendedName>
    <alternativeName>
        <fullName evidence="2">50S ribosomal protein L28</fullName>
    </alternativeName>
</protein>
<accession>B7J7Y4</accession>
<sequence>MSRVCKVTGKKPMAGNNVSHAHNKTRRRFLPNLQYHRFWVESENRWVRMRVSTKGIRTIDKKGIDVVLADLRAAGEKI</sequence>